<gene>
    <name type="ordered locus">OTBS_0251</name>
</gene>
<comment type="subcellular location">
    <subcellularLocation>
        <location evidence="1">Cytoplasm</location>
    </subcellularLocation>
</comment>
<comment type="similarity">
    <text evidence="1">Belongs to the TACO1 family.</text>
</comment>
<feature type="chain" id="PRO_1000045351" description="Probable transcriptional regulatory protein OTBS_0251">
    <location>
        <begin position="1"/>
        <end position="249"/>
    </location>
</feature>
<keyword id="KW-0963">Cytoplasm</keyword>
<keyword id="KW-0238">DNA-binding</keyword>
<keyword id="KW-1185">Reference proteome</keyword>
<keyword id="KW-0804">Transcription</keyword>
<keyword id="KW-0805">Transcription regulation</keyword>
<protein>
    <recommendedName>
        <fullName evidence="1">Probable transcriptional regulatory protein OTBS_0251</fullName>
    </recommendedName>
</protein>
<evidence type="ECO:0000255" key="1">
    <source>
        <dbReference type="HAMAP-Rule" id="MF_00693"/>
    </source>
</evidence>
<reference key="1">
    <citation type="journal article" date="2007" name="Proc. Natl. Acad. Sci. U.S.A.">
        <title>The Orientia tsutsugamushi genome reveals massive proliferation of conjugative type IV secretion system and host-cell interaction genes.</title>
        <authorList>
            <person name="Cho N.-H."/>
            <person name="Kim H.-R."/>
            <person name="Lee J.-H."/>
            <person name="Kim S.-Y."/>
            <person name="Kim J."/>
            <person name="Cha S."/>
            <person name="Kim S.-Y."/>
            <person name="Darby A.C."/>
            <person name="Fuxelius H.-H."/>
            <person name="Yin J."/>
            <person name="Kim J.H."/>
            <person name="Kim J."/>
            <person name="Lee S.J."/>
            <person name="Koh Y.-S."/>
            <person name="Jang W.-J."/>
            <person name="Park K.-H."/>
            <person name="Andersson S.G.E."/>
            <person name="Choi M.-S."/>
            <person name="Kim I.-S."/>
        </authorList>
    </citation>
    <scope>NUCLEOTIDE SEQUENCE [LARGE SCALE GENOMIC DNA]</scope>
    <source>
        <strain>Boryong</strain>
    </source>
</reference>
<proteinExistence type="inferred from homology"/>
<organism>
    <name type="scientific">Orientia tsutsugamushi (strain Boryong)</name>
    <name type="common">Rickettsia tsutsugamushi</name>
    <dbReference type="NCBI Taxonomy" id="357244"/>
    <lineage>
        <taxon>Bacteria</taxon>
        <taxon>Pseudomonadati</taxon>
        <taxon>Pseudomonadota</taxon>
        <taxon>Alphaproteobacteria</taxon>
        <taxon>Rickettsiales</taxon>
        <taxon>Rickettsiaceae</taxon>
        <taxon>Rickettsieae</taxon>
        <taxon>Orientia</taxon>
    </lineage>
</organism>
<name>Y251_ORITB</name>
<dbReference type="EMBL" id="AM494475">
    <property type="protein sequence ID" value="CAM79317.1"/>
    <property type="molecule type" value="Genomic_DNA"/>
</dbReference>
<dbReference type="RefSeq" id="WP_011944359.1">
    <property type="nucleotide sequence ID" value="NC_009488.1"/>
</dbReference>
<dbReference type="SMR" id="A5CCC2"/>
<dbReference type="KEGG" id="ots:OTBS_0251"/>
<dbReference type="eggNOG" id="COG0217">
    <property type="taxonomic scope" value="Bacteria"/>
</dbReference>
<dbReference type="HOGENOM" id="CLU_062974_2_2_5"/>
<dbReference type="Proteomes" id="UP000001565">
    <property type="component" value="Chromosome"/>
</dbReference>
<dbReference type="GO" id="GO:0005737">
    <property type="term" value="C:cytoplasm"/>
    <property type="evidence" value="ECO:0007669"/>
    <property type="project" value="UniProtKB-SubCell"/>
</dbReference>
<dbReference type="GO" id="GO:0003677">
    <property type="term" value="F:DNA binding"/>
    <property type="evidence" value="ECO:0007669"/>
    <property type="project" value="UniProtKB-UniRule"/>
</dbReference>
<dbReference type="GO" id="GO:0006355">
    <property type="term" value="P:regulation of DNA-templated transcription"/>
    <property type="evidence" value="ECO:0007669"/>
    <property type="project" value="UniProtKB-UniRule"/>
</dbReference>
<dbReference type="FunFam" id="1.10.10.200:FF:000002">
    <property type="entry name" value="Probable transcriptional regulatory protein CLM62_37755"/>
    <property type="match status" value="1"/>
</dbReference>
<dbReference type="Gene3D" id="1.10.10.200">
    <property type="match status" value="1"/>
</dbReference>
<dbReference type="Gene3D" id="3.30.70.980">
    <property type="match status" value="2"/>
</dbReference>
<dbReference type="HAMAP" id="MF_00693">
    <property type="entry name" value="Transcrip_reg_TACO1"/>
    <property type="match status" value="1"/>
</dbReference>
<dbReference type="InterPro" id="IPR017856">
    <property type="entry name" value="Integrase-like_N"/>
</dbReference>
<dbReference type="InterPro" id="IPR048300">
    <property type="entry name" value="TACO1_YebC-like_2nd/3rd_dom"/>
</dbReference>
<dbReference type="InterPro" id="IPR049083">
    <property type="entry name" value="TACO1_YebC_N"/>
</dbReference>
<dbReference type="InterPro" id="IPR002876">
    <property type="entry name" value="Transcrip_reg_TACO1-like"/>
</dbReference>
<dbReference type="InterPro" id="IPR026564">
    <property type="entry name" value="Transcrip_reg_TACO1-like_dom3"/>
</dbReference>
<dbReference type="InterPro" id="IPR029072">
    <property type="entry name" value="YebC-like"/>
</dbReference>
<dbReference type="NCBIfam" id="NF001030">
    <property type="entry name" value="PRK00110.1"/>
    <property type="match status" value="1"/>
</dbReference>
<dbReference type="NCBIfam" id="NF009044">
    <property type="entry name" value="PRK12378.1"/>
    <property type="match status" value="1"/>
</dbReference>
<dbReference type="NCBIfam" id="TIGR01033">
    <property type="entry name" value="YebC/PmpR family DNA-binding transcriptional regulator"/>
    <property type="match status" value="1"/>
</dbReference>
<dbReference type="PANTHER" id="PTHR12532:SF11">
    <property type="match status" value="1"/>
</dbReference>
<dbReference type="PANTHER" id="PTHR12532">
    <property type="entry name" value="TRANSLATIONAL ACTIVATOR OF CYTOCHROME C OXIDASE 1"/>
    <property type="match status" value="1"/>
</dbReference>
<dbReference type="Pfam" id="PF20772">
    <property type="entry name" value="TACO1_YebC_N"/>
    <property type="match status" value="1"/>
</dbReference>
<dbReference type="Pfam" id="PF01709">
    <property type="entry name" value="Transcrip_reg"/>
    <property type="match status" value="1"/>
</dbReference>
<dbReference type="SUPFAM" id="SSF75625">
    <property type="entry name" value="YebC-like"/>
    <property type="match status" value="1"/>
</dbReference>
<accession>A5CCC2</accession>
<sequence length="249" mass="28101">MAGHSKFKNIQHRKGAQDKKKAKLFASLIREISLSAKSGTDIQYNHRLRAAISAAKFNNLPKDRIEKAIAQANNKDNYENYFEITYEGIIFDGIAIIVEALTDNTNRTAANVRAIFSKYGGNLVGTGNASFLFDRLGIIKFESKASTSEKLFDAAIEIGAEDIELDEEYNVVYTPIKLFTNIIEELAQLFGYPVESYIGWRPRNTVLISDTEKAQKLIKLVNALDDDDDVQRFFGNYEFSEQIYNNSLT</sequence>